<feature type="chain" id="PRO_1000134024" description="2,3,4,5-tetrahydropyridine-2,6-dicarboxylate N-succinyltransferase">
    <location>
        <begin position="1"/>
        <end position="273"/>
    </location>
</feature>
<reference key="1">
    <citation type="journal article" date="2008" name="Antimicrob. Agents Chemother.">
        <title>Whole-genome pyrosequencing of an epidemic multidrug-resistant Acinetobacter baumannii strain belonging to the European clone II group.</title>
        <authorList>
            <person name="Iacono M."/>
            <person name="Villa L."/>
            <person name="Fortini D."/>
            <person name="Bordoni R."/>
            <person name="Imperi F."/>
            <person name="Bonnal R.J."/>
            <person name="Sicheritz-Ponten T."/>
            <person name="De Bellis G."/>
            <person name="Visca P."/>
            <person name="Cassone A."/>
            <person name="Carattoli A."/>
        </authorList>
    </citation>
    <scope>NUCLEOTIDE SEQUENCE [LARGE SCALE GENOMIC DNA]</scope>
    <source>
        <strain>ACICU</strain>
    </source>
</reference>
<protein>
    <recommendedName>
        <fullName evidence="1">2,3,4,5-tetrahydropyridine-2,6-dicarboxylate N-succinyltransferase</fullName>
        <ecNumber evidence="1">2.3.1.117</ecNumber>
    </recommendedName>
    <alternativeName>
        <fullName evidence="1">Tetrahydrodipicolinate N-succinyltransferase</fullName>
        <shortName evidence="1">THP succinyltransferase</shortName>
        <shortName evidence="1">Tetrahydropicolinate succinylase</shortName>
    </alternativeName>
</protein>
<organism>
    <name type="scientific">Acinetobacter baumannii (strain ACICU)</name>
    <dbReference type="NCBI Taxonomy" id="405416"/>
    <lineage>
        <taxon>Bacteria</taxon>
        <taxon>Pseudomonadati</taxon>
        <taxon>Pseudomonadota</taxon>
        <taxon>Gammaproteobacteria</taxon>
        <taxon>Moraxellales</taxon>
        <taxon>Moraxellaceae</taxon>
        <taxon>Acinetobacter</taxon>
        <taxon>Acinetobacter calcoaceticus/baumannii complex</taxon>
    </lineage>
</organism>
<sequence length="273" mass="29552">MSQLSTIIEQAFEDRANFTAADCPSEIRQAVEEAIAGLDNGTLRVAEKINGEWVVHQWLKKAVLLSFKLNDNKPIESCDLRFYDKVETKFSGWTEEQFKAAGVRVVPPAVARRGSFQAKNVVLMPSYVNIGAYVDEGTMVDTWATVGSCAQIGKNVHLSGGVGIGGVLEPLQANPTIIEDNCFIGARSEIVEGVIVEEGSVISMGVYIGQSTRIYDRETGEIHYGRVPAGSVVVPGNLPSADGKYSLYAAIIVKKVDAQTRAKTSLNDLLRAD</sequence>
<keyword id="KW-0012">Acyltransferase</keyword>
<keyword id="KW-0028">Amino-acid biosynthesis</keyword>
<keyword id="KW-0963">Cytoplasm</keyword>
<keyword id="KW-0220">Diaminopimelate biosynthesis</keyword>
<keyword id="KW-0457">Lysine biosynthesis</keyword>
<keyword id="KW-0677">Repeat</keyword>
<keyword id="KW-0808">Transferase</keyword>
<evidence type="ECO:0000255" key="1">
    <source>
        <dbReference type="HAMAP-Rule" id="MF_00811"/>
    </source>
</evidence>
<accession>B2HWR7</accession>
<proteinExistence type="inferred from homology"/>
<dbReference type="EC" id="2.3.1.117" evidence="1"/>
<dbReference type="EMBL" id="CP000863">
    <property type="protein sequence ID" value="ACC58126.1"/>
    <property type="molecule type" value="Genomic_DNA"/>
</dbReference>
<dbReference type="RefSeq" id="WP_000080867.1">
    <property type="nucleotide sequence ID" value="NZ_CP031380.1"/>
</dbReference>
<dbReference type="SMR" id="B2HWR7"/>
<dbReference type="GeneID" id="92894847"/>
<dbReference type="KEGG" id="abc:ACICU_02814"/>
<dbReference type="HOGENOM" id="CLU_050859_0_1_6"/>
<dbReference type="UniPathway" id="UPA00034">
    <property type="reaction ID" value="UER00019"/>
</dbReference>
<dbReference type="Proteomes" id="UP000008839">
    <property type="component" value="Chromosome"/>
</dbReference>
<dbReference type="GO" id="GO:0005737">
    <property type="term" value="C:cytoplasm"/>
    <property type="evidence" value="ECO:0007669"/>
    <property type="project" value="UniProtKB-SubCell"/>
</dbReference>
<dbReference type="GO" id="GO:0008666">
    <property type="term" value="F:2,3,4,5-tetrahydropyridine-2,6-dicarboxylate N-succinyltransferase activity"/>
    <property type="evidence" value="ECO:0007669"/>
    <property type="project" value="UniProtKB-UniRule"/>
</dbReference>
<dbReference type="GO" id="GO:0016779">
    <property type="term" value="F:nucleotidyltransferase activity"/>
    <property type="evidence" value="ECO:0007669"/>
    <property type="project" value="TreeGrafter"/>
</dbReference>
<dbReference type="GO" id="GO:0019877">
    <property type="term" value="P:diaminopimelate biosynthetic process"/>
    <property type="evidence" value="ECO:0007669"/>
    <property type="project" value="UniProtKB-UniRule"/>
</dbReference>
<dbReference type="GO" id="GO:0009089">
    <property type="term" value="P:lysine biosynthetic process via diaminopimelate"/>
    <property type="evidence" value="ECO:0007669"/>
    <property type="project" value="UniProtKB-UniRule"/>
</dbReference>
<dbReference type="CDD" id="cd03350">
    <property type="entry name" value="LbH_THP_succinylT"/>
    <property type="match status" value="1"/>
</dbReference>
<dbReference type="Gene3D" id="2.160.10.10">
    <property type="entry name" value="Hexapeptide repeat proteins"/>
    <property type="match status" value="1"/>
</dbReference>
<dbReference type="Gene3D" id="1.10.166.10">
    <property type="entry name" value="Tetrahydrodipicolinate-N-succinyltransferase, N-terminal domain"/>
    <property type="match status" value="1"/>
</dbReference>
<dbReference type="HAMAP" id="MF_00811">
    <property type="entry name" value="DapD"/>
    <property type="match status" value="1"/>
</dbReference>
<dbReference type="InterPro" id="IPR005664">
    <property type="entry name" value="DapD_Trfase_Hexpep_rpt_fam"/>
</dbReference>
<dbReference type="InterPro" id="IPR001451">
    <property type="entry name" value="Hexapep"/>
</dbReference>
<dbReference type="InterPro" id="IPR018357">
    <property type="entry name" value="Hexapep_transf_CS"/>
</dbReference>
<dbReference type="InterPro" id="IPR023180">
    <property type="entry name" value="THP_succinylTrfase_dom1"/>
</dbReference>
<dbReference type="InterPro" id="IPR037133">
    <property type="entry name" value="THP_succinylTrfase_N_sf"/>
</dbReference>
<dbReference type="InterPro" id="IPR011004">
    <property type="entry name" value="Trimer_LpxA-like_sf"/>
</dbReference>
<dbReference type="NCBIfam" id="TIGR00965">
    <property type="entry name" value="dapD"/>
    <property type="match status" value="1"/>
</dbReference>
<dbReference type="NCBIfam" id="NF008808">
    <property type="entry name" value="PRK11830.1"/>
    <property type="match status" value="1"/>
</dbReference>
<dbReference type="PANTHER" id="PTHR19136:SF52">
    <property type="entry name" value="2,3,4,5-TETRAHYDROPYRIDINE-2,6-DICARBOXYLATE N-SUCCINYLTRANSFERASE"/>
    <property type="match status" value="1"/>
</dbReference>
<dbReference type="PANTHER" id="PTHR19136">
    <property type="entry name" value="MOLYBDENUM COFACTOR GUANYLYLTRANSFERASE"/>
    <property type="match status" value="1"/>
</dbReference>
<dbReference type="Pfam" id="PF14602">
    <property type="entry name" value="Hexapep_2"/>
    <property type="match status" value="1"/>
</dbReference>
<dbReference type="Pfam" id="PF14805">
    <property type="entry name" value="THDPS_N_2"/>
    <property type="match status" value="1"/>
</dbReference>
<dbReference type="SUPFAM" id="SSF51161">
    <property type="entry name" value="Trimeric LpxA-like enzymes"/>
    <property type="match status" value="1"/>
</dbReference>
<dbReference type="PROSITE" id="PS00101">
    <property type="entry name" value="HEXAPEP_TRANSFERASES"/>
    <property type="match status" value="1"/>
</dbReference>
<gene>
    <name evidence="1" type="primary">dapD</name>
    <name type="ordered locus">ACICU_02814</name>
</gene>
<name>DAPD_ACIBC</name>
<comment type="catalytic activity">
    <reaction evidence="1">
        <text>(S)-2,3,4,5-tetrahydrodipicolinate + succinyl-CoA + H2O = (S)-2-succinylamino-6-oxoheptanedioate + CoA</text>
        <dbReference type="Rhea" id="RHEA:17325"/>
        <dbReference type="ChEBI" id="CHEBI:15377"/>
        <dbReference type="ChEBI" id="CHEBI:15685"/>
        <dbReference type="ChEBI" id="CHEBI:16845"/>
        <dbReference type="ChEBI" id="CHEBI:57287"/>
        <dbReference type="ChEBI" id="CHEBI:57292"/>
        <dbReference type="EC" id="2.3.1.117"/>
    </reaction>
</comment>
<comment type="pathway">
    <text evidence="1">Amino-acid biosynthesis; L-lysine biosynthesis via DAP pathway; LL-2,6-diaminopimelate from (S)-tetrahydrodipicolinate (succinylase route): step 1/3.</text>
</comment>
<comment type="subcellular location">
    <subcellularLocation>
        <location evidence="1">Cytoplasm</location>
    </subcellularLocation>
</comment>
<comment type="similarity">
    <text evidence="1">Belongs to the transferase hexapeptide repeat family.</text>
</comment>